<feature type="chain" id="PRO_0000274772" description="Phosphonates import ATP-binding protein PhnC 2">
    <location>
        <begin position="1"/>
        <end position="281"/>
    </location>
</feature>
<feature type="domain" description="ABC transporter" evidence="1">
    <location>
        <begin position="4"/>
        <end position="238"/>
    </location>
</feature>
<feature type="region of interest" description="Disordered" evidence="2">
    <location>
        <begin position="243"/>
        <end position="281"/>
    </location>
</feature>
<feature type="compositionally biased region" description="Low complexity" evidence="2">
    <location>
        <begin position="244"/>
        <end position="255"/>
    </location>
</feature>
<feature type="binding site" evidence="1">
    <location>
        <begin position="35"/>
        <end position="42"/>
    </location>
    <ligand>
        <name>ATP</name>
        <dbReference type="ChEBI" id="CHEBI:30616"/>
    </ligand>
</feature>
<reference key="1">
    <citation type="journal article" date="2006" name="BMC Genomics">
        <title>The genome of the square archaeon Haloquadratum walsbyi: life at the limits of water activity.</title>
        <authorList>
            <person name="Bolhuis H."/>
            <person name="Palm P."/>
            <person name="Wende A."/>
            <person name="Falb M."/>
            <person name="Rampp M."/>
            <person name="Rodriguez-Valera F."/>
            <person name="Pfeiffer F."/>
            <person name="Oesterhelt D."/>
        </authorList>
    </citation>
    <scope>NUCLEOTIDE SEQUENCE [LARGE SCALE GENOMIC DNA]</scope>
    <source>
        <strain>DSM 16790 / HBSQ001</strain>
    </source>
</reference>
<gene>
    <name evidence="1" type="primary">phnC2</name>
    <name type="ordered locus">HQ_2597A</name>
</gene>
<evidence type="ECO:0000255" key="1">
    <source>
        <dbReference type="HAMAP-Rule" id="MF_01713"/>
    </source>
</evidence>
<evidence type="ECO:0000256" key="2">
    <source>
        <dbReference type="SAM" id="MobiDB-lite"/>
    </source>
</evidence>
<proteinExistence type="inferred from homology"/>
<name>PHNC2_HALWD</name>
<keyword id="KW-0067">ATP-binding</keyword>
<keyword id="KW-1003">Cell membrane</keyword>
<keyword id="KW-0472">Membrane</keyword>
<keyword id="KW-0547">Nucleotide-binding</keyword>
<keyword id="KW-0918">Phosphonate transport</keyword>
<keyword id="KW-1185">Reference proteome</keyword>
<keyword id="KW-1278">Translocase</keyword>
<keyword id="KW-0813">Transport</keyword>
<organism>
    <name type="scientific">Haloquadratum walsbyi (strain DSM 16790 / HBSQ001)</name>
    <dbReference type="NCBI Taxonomy" id="362976"/>
    <lineage>
        <taxon>Archaea</taxon>
        <taxon>Methanobacteriati</taxon>
        <taxon>Methanobacteriota</taxon>
        <taxon>Stenosarchaea group</taxon>
        <taxon>Halobacteria</taxon>
        <taxon>Halobacteriales</taxon>
        <taxon>Haloferacaceae</taxon>
        <taxon>Haloquadratum</taxon>
    </lineage>
</organism>
<comment type="function">
    <text evidence="1">Part of the ABC transporter complex PhnCDE involved in phosphonates import. Responsible for energy coupling to the transport system.</text>
</comment>
<comment type="catalytic activity">
    <reaction evidence="1">
        <text>phosphonate(out) + ATP + H2O = phosphonate(in) + ADP + phosphate + H(+)</text>
        <dbReference type="Rhea" id="RHEA:18065"/>
        <dbReference type="ChEBI" id="CHEBI:15377"/>
        <dbReference type="ChEBI" id="CHEBI:15378"/>
        <dbReference type="ChEBI" id="CHEBI:16215"/>
        <dbReference type="ChEBI" id="CHEBI:30616"/>
        <dbReference type="ChEBI" id="CHEBI:43474"/>
        <dbReference type="ChEBI" id="CHEBI:456216"/>
        <dbReference type="EC" id="7.3.2.2"/>
    </reaction>
</comment>
<comment type="subunit">
    <text evidence="1">The complex is composed of two ATP-binding proteins (PhnC), two transmembrane proteins (PhnE) and a solute-binding protein (PhnD).</text>
</comment>
<comment type="subcellular location">
    <subcellularLocation>
        <location evidence="1">Cell membrane</location>
        <topology evidence="1">Peripheral membrane protein</topology>
    </subcellularLocation>
</comment>
<comment type="similarity">
    <text evidence="1">Belongs to the ABC transporter superfamily. Phosphonates importer (TC 3.A.1.9.1) family.</text>
</comment>
<dbReference type="EC" id="7.3.2.2" evidence="1"/>
<dbReference type="EMBL" id="AM180088">
    <property type="protein sequence ID" value="CAJ52709.1"/>
    <property type="molecule type" value="Genomic_DNA"/>
</dbReference>
<dbReference type="RefSeq" id="WP_011571825.1">
    <property type="nucleotide sequence ID" value="NC_008212.1"/>
</dbReference>
<dbReference type="SMR" id="Q18H36"/>
<dbReference type="STRING" id="362976.HQ_2597A"/>
<dbReference type="GeneID" id="4194448"/>
<dbReference type="KEGG" id="hwa:HQ_2597A"/>
<dbReference type="eggNOG" id="arCOG00206">
    <property type="taxonomic scope" value="Archaea"/>
</dbReference>
<dbReference type="HOGENOM" id="CLU_000604_1_22_2"/>
<dbReference type="Proteomes" id="UP000001975">
    <property type="component" value="Chromosome"/>
</dbReference>
<dbReference type="GO" id="GO:0005886">
    <property type="term" value="C:plasma membrane"/>
    <property type="evidence" value="ECO:0007669"/>
    <property type="project" value="UniProtKB-SubCell"/>
</dbReference>
<dbReference type="GO" id="GO:0015416">
    <property type="term" value="F:ABC-type phosphonate transporter activity"/>
    <property type="evidence" value="ECO:0007669"/>
    <property type="project" value="UniProtKB-EC"/>
</dbReference>
<dbReference type="GO" id="GO:0005524">
    <property type="term" value="F:ATP binding"/>
    <property type="evidence" value="ECO:0007669"/>
    <property type="project" value="UniProtKB-KW"/>
</dbReference>
<dbReference type="GO" id="GO:0016887">
    <property type="term" value="F:ATP hydrolysis activity"/>
    <property type="evidence" value="ECO:0007669"/>
    <property type="project" value="InterPro"/>
</dbReference>
<dbReference type="CDD" id="cd03256">
    <property type="entry name" value="ABC_PhnC_transporter"/>
    <property type="match status" value="1"/>
</dbReference>
<dbReference type="Gene3D" id="3.40.50.300">
    <property type="entry name" value="P-loop containing nucleotide triphosphate hydrolases"/>
    <property type="match status" value="1"/>
</dbReference>
<dbReference type="InterPro" id="IPR003593">
    <property type="entry name" value="AAA+_ATPase"/>
</dbReference>
<dbReference type="InterPro" id="IPR003439">
    <property type="entry name" value="ABC_transporter-like_ATP-bd"/>
</dbReference>
<dbReference type="InterPro" id="IPR017871">
    <property type="entry name" value="ABC_transporter-like_CS"/>
</dbReference>
<dbReference type="InterPro" id="IPR012693">
    <property type="entry name" value="ABC_transpr_PhnC"/>
</dbReference>
<dbReference type="InterPro" id="IPR050086">
    <property type="entry name" value="MetN_ABC_transporter-like"/>
</dbReference>
<dbReference type="InterPro" id="IPR027417">
    <property type="entry name" value="P-loop_NTPase"/>
</dbReference>
<dbReference type="InterPro" id="IPR025662">
    <property type="entry name" value="Sigma_54_int_dom_ATP-bd_1"/>
</dbReference>
<dbReference type="PANTHER" id="PTHR43166">
    <property type="entry name" value="AMINO ACID IMPORT ATP-BINDING PROTEIN"/>
    <property type="match status" value="1"/>
</dbReference>
<dbReference type="PANTHER" id="PTHR43166:SF6">
    <property type="entry name" value="PHOSPHONATES IMPORT ATP-BINDING PROTEIN PHNC"/>
    <property type="match status" value="1"/>
</dbReference>
<dbReference type="Pfam" id="PF00005">
    <property type="entry name" value="ABC_tran"/>
    <property type="match status" value="1"/>
</dbReference>
<dbReference type="SMART" id="SM00382">
    <property type="entry name" value="AAA"/>
    <property type="match status" value="1"/>
</dbReference>
<dbReference type="SUPFAM" id="SSF52540">
    <property type="entry name" value="P-loop containing nucleoside triphosphate hydrolases"/>
    <property type="match status" value="1"/>
</dbReference>
<dbReference type="PROSITE" id="PS00211">
    <property type="entry name" value="ABC_TRANSPORTER_1"/>
    <property type="match status" value="1"/>
</dbReference>
<dbReference type="PROSITE" id="PS50893">
    <property type="entry name" value="ABC_TRANSPORTER_2"/>
    <property type="match status" value="1"/>
</dbReference>
<dbReference type="PROSITE" id="PS51249">
    <property type="entry name" value="PHNC"/>
    <property type="match status" value="1"/>
</dbReference>
<protein>
    <recommendedName>
        <fullName evidence="1">Phosphonates import ATP-binding protein PhnC 2</fullName>
        <ecNumber evidence="1">7.3.2.2</ecNumber>
    </recommendedName>
</protein>
<accession>Q18H36</accession>
<sequence>MSTLTVDNVTKTYGDVVALDSVSFEIENEFVVLLGESGAGKSTMLRCVNGLTHPTEGEIRLNGDPINGSRSDIGMIFQQHNLVDGVSAYMNALTGSLDRTSTVSSLLQQQNKETKERALEALQTVGLLEESHQRTSQMSGGQQQRVGIARALVQDPALLLADEPVASLDPSSAESVMDYLKKAASVHEVTALVSLHQVNIAAYFGERFIGLRDGEILFDVSPEKLTPGLVDDLYGNVETVGLATDNSDNSTVDTSDGTRYDTETGSDGTDEVDVIGRQVES</sequence>